<accession>Q80SU3</accession>
<accession>Q4FZK8</accession>
<sequence length="361" mass="39986">MFPASTFHPCPHPYPQATKAGDGWRFGARGCRPAPPSFLPGYRQLMAAEYVDSHQRAQLMALLSRMGPRSVSSRDAAVQVNPRRDASVQCSLGRRTLQPAGCRASPDARSGSCQPRGHAGAGRSPRSWQTVAPFSSVTFCGLSSSLEVAGGRQTPTKGEGSPASSGTREPEPREVAARKAVPQPRSEEGDVQAAGQAGWEQQPPPEDRNSVAAMQSEPGSEEPCPAAEMAQDPGDSDAPRDQASPQSTEQDKERLRFQFLEQKYGYYHCKDCKIRWESAYVWCVQGTSKVYFKQFCRVCEKSYNPYRVEDITCQSCKRTRCACPVRLRHVDPKRPHRQDLCGRCKDKRLSCDSTFSFKYII</sequence>
<keyword id="KW-0963">Cytoplasm</keyword>
<keyword id="KW-0217">Developmental protein</keyword>
<keyword id="KW-0221">Differentiation</keyword>
<keyword id="KW-0479">Metal-binding</keyword>
<keyword id="KW-0896">Oogenesis</keyword>
<keyword id="KW-0597">Phosphoprotein</keyword>
<keyword id="KW-1185">Reference proteome</keyword>
<keyword id="KW-0694">RNA-binding</keyword>
<keyword id="KW-0832">Ubl conjugation</keyword>
<keyword id="KW-0862">Zinc</keyword>
<keyword id="KW-0863">Zinc-finger</keyword>
<feature type="chain" id="PRO_0000187012" description="Zygote arrest protein 1">
    <location>
        <begin position="1"/>
        <end position="361"/>
    </location>
</feature>
<feature type="zinc finger region" description="3CxxC-type" evidence="1">
    <location>
        <begin position="263"/>
        <end position="346"/>
    </location>
</feature>
<feature type="region of interest" description="Disordered" evidence="6">
    <location>
        <begin position="1"/>
        <end position="23"/>
    </location>
</feature>
<feature type="region of interest" description="Disordered" evidence="2">
    <location>
        <begin position="98"/>
        <end position="128"/>
    </location>
</feature>
<feature type="region of interest" description="Disordered" evidence="2">
    <location>
        <begin position="148"/>
        <end position="252"/>
    </location>
</feature>
<feature type="compositionally biased region" description="Basic and acidic residues" evidence="2">
    <location>
        <begin position="168"/>
        <end position="177"/>
    </location>
</feature>
<feature type="modified residue" description="Phosphothreonine; by CDK1" evidence="6">
    <location>
        <position position="154"/>
    </location>
</feature>
<feature type="modified residue" description="Phosphoserine; by CDK1" evidence="6">
    <location>
        <position position="161"/>
    </location>
</feature>
<feature type="mutagenesis site" description="Does not regulate formation of MARDO membraneless compartment; when associated with A-161." evidence="6">
    <original>T</original>
    <variation>A</variation>
    <location>
        <position position="154"/>
    </location>
</feature>
<feature type="mutagenesis site" description="Mimics phosphorylation state; does not regulate formation of MARDO membraneless compartment; when associated with D-161." evidence="6">
    <original>T</original>
    <variation>D</variation>
    <location>
        <position position="154"/>
    </location>
</feature>
<feature type="mutagenesis site" description="Does not regulate formation of MARDO membraneless compartment; when associated with A-154." evidence="6">
    <original>S</original>
    <variation>A</variation>
    <location>
        <position position="161"/>
    </location>
</feature>
<feature type="mutagenesis site" description="Mimics phosphorylation state; does not regulate formation of MARDO membraneless compartment; when associated with D-154." evidence="6">
    <original>S</original>
    <variation>D</variation>
    <location>
        <position position="161"/>
    </location>
</feature>
<feature type="mutagenesis site" description="In 4CS mutant; abolished binding to the 3'-UTR of maternal mRNAs; when associated with S-296, S-313 and S-341." evidence="5">
    <original>C</original>
    <variation>S</variation>
    <location>
        <position position="269"/>
    </location>
</feature>
<feature type="mutagenesis site" description="In 4CS mutant; abolished binding to the 3'-UTR of maternal mRNAs; when associated with S-269, S-313 and S-341." evidence="5">
    <original>C</original>
    <variation>S</variation>
    <location>
        <position position="296"/>
    </location>
</feature>
<feature type="mutagenesis site" description="In 4CS mutant; abolished binding to the 3'-UTR of maternal mRNAs; when associated with S-269, S-296 and S-341." evidence="5">
    <original>C</original>
    <variation>S</variation>
    <location>
        <position position="313"/>
    </location>
</feature>
<feature type="mutagenesis site" description="In 4CS mutant; abolished binding to the 3'-UTR of maternal mRNAs; when associated with S-269, S-296 and S-313." evidence="5">
    <original>C</original>
    <variation>S</variation>
    <location>
        <position position="341"/>
    </location>
</feature>
<name>ZAR1_MOUSE</name>
<organism>
    <name type="scientific">Mus musculus</name>
    <name type="common">Mouse</name>
    <dbReference type="NCBI Taxonomy" id="10090"/>
    <lineage>
        <taxon>Eukaryota</taxon>
        <taxon>Metazoa</taxon>
        <taxon>Chordata</taxon>
        <taxon>Craniata</taxon>
        <taxon>Vertebrata</taxon>
        <taxon>Euteleostomi</taxon>
        <taxon>Mammalia</taxon>
        <taxon>Eutheria</taxon>
        <taxon>Euarchontoglires</taxon>
        <taxon>Glires</taxon>
        <taxon>Rodentia</taxon>
        <taxon>Myomorpha</taxon>
        <taxon>Muroidea</taxon>
        <taxon>Muridae</taxon>
        <taxon>Murinae</taxon>
        <taxon>Mus</taxon>
        <taxon>Mus</taxon>
    </lineage>
</organism>
<protein>
    <recommendedName>
        <fullName evidence="7">Zygote arrest protein 1</fullName>
    </recommendedName>
    <alternativeName>
        <fullName evidence="7">Oocyte-specific maternal effect factor</fullName>
    </alternativeName>
</protein>
<reference key="1">
    <citation type="journal article" date="2003" name="Nat. Genet.">
        <title>Zygote arrest 1 (Zar1) is a novel maternal-effect gene critical for the oocyte-to-embryo transition.</title>
        <authorList>
            <person name="Wu X."/>
            <person name="Viveiros M.M."/>
            <person name="Eppig J.J."/>
            <person name="Bai Y."/>
            <person name="Fitzpatrick S.L."/>
            <person name="Matzuk M.M."/>
        </authorList>
    </citation>
    <scope>NUCLEOTIDE SEQUENCE [GENOMIC DNA / MRNA]</scope>
    <scope>FUNCTION</scope>
    <scope>TISSUE SPECIFICITY</scope>
    <scope>DEVELOPMENTAL STAGE</scope>
    <scope>SUBCELLULAR LOCATION</scope>
    <source>
        <strain>129/SvEv</strain>
        <tissue>Ovary</tissue>
    </source>
</reference>
<reference key="2">
    <citation type="journal article" date="2003" name="Biol. Reprod.">
        <title>Zygote arrest 1 (Zar1) is an evolutionarily conserved gene expressed in vertebrate ovaries.</title>
        <authorList>
            <person name="Wu X."/>
            <person name="Wang P."/>
            <person name="Brown C.A."/>
            <person name="Zilinski C.A."/>
            <person name="Matzuk M.M."/>
        </authorList>
    </citation>
    <scope>NUCLEOTIDE SEQUENCE</scope>
    <scope>TISSUE SPECIFICITY</scope>
    <source>
        <tissue>Ovary</tissue>
    </source>
</reference>
<reference key="3">
    <citation type="journal article" date="2004" name="Genome Res.">
        <title>The status, quality, and expansion of the NIH full-length cDNA project: the Mammalian Gene Collection (MGC).</title>
        <authorList>
            <consortium name="The MGC Project Team"/>
        </authorList>
    </citation>
    <scope>NUCLEOTIDE SEQUENCE [LARGE SCALE MRNA]</scope>
    <source>
        <tissue>Oocyte</tissue>
    </source>
</reference>
<reference key="4">
    <citation type="journal article" date="2019" name="Nucleic Acids Res.">
        <title>ZAR1 and ZAR2 are required for oocyte meiotic maturation by regulating the maternal transcriptome and mRNA translational activation.</title>
        <authorList>
            <person name="Rong Y."/>
            <person name="Ji S.Y."/>
            <person name="Zhu Y.Z."/>
            <person name="Wu Y.W."/>
            <person name="Shen L."/>
            <person name="Fan H.Y."/>
        </authorList>
    </citation>
    <scope>FUNCTION</scope>
    <scope>SUBCELLULAR LOCATION</scope>
    <scope>TISSUE SPECIFICITY</scope>
    <scope>DOMAIN</scope>
    <scope>DISRUPTION PHENOTYPE</scope>
    <scope>INTERACTION WITH YBX2</scope>
    <scope>MUTAGENESIS OF CYS-269; CYS-296; CYS-313 AND CYS-341</scope>
</reference>
<reference key="5">
    <citation type="journal article" date="2022" name="Science">
        <title>Mammalian oocytes store mRNAs in a mitochondria-associated membraneless compartment.</title>
        <authorList>
            <person name="Cheng S."/>
            <person name="Altmeppen G."/>
            <person name="So C."/>
            <person name="Welp L.M."/>
            <person name="Penir S."/>
            <person name="Ruhwedel T."/>
            <person name="Menelaou K."/>
            <person name="Harasimov K."/>
            <person name="Stuetzer A."/>
            <person name="Blayney M."/>
            <person name="Elder K."/>
            <person name="Moebius W."/>
            <person name="Urlaub H."/>
            <person name="Schuh M."/>
        </authorList>
    </citation>
    <scope>FUNCTION</scope>
    <scope>SUBCELLULAR LOCATION</scope>
    <scope>DOMAIN</scope>
    <scope>DISRUPTION PHENOTYPE</scope>
    <scope>UBIQUITINATION</scope>
    <scope>PHOSPHORYLATION AT THR-154 AND SER-161</scope>
    <scope>MUTAGENESIS OF THR-154 AND SER-161</scope>
</reference>
<comment type="function">
    <text evidence="3 5 6">mRNA-binding protein that mediates formation of MARDO (mitochondria-associated ribonucleoprotein domain), a membraneless compartment that stores maternal mRNAs in oocytes (PubMed:36264786). MARDO assembly around mitochondria is directed by an increase in mitochondrial membrane potential during oocyte growth (PubMed:36264786). Promotes formation of MARDO phase-separated membraneless compartment by undergoing liquid-liquid phase separation upon binding to maternal mRNAs (PubMed:36264786). Binds to the 3'-UTR of maternal mRNAs (PubMed:31598710). Maternal mRNAs stored in the MARDO are translationally repressed (PubMed:36264786). Essential for female fertility and oocyte-to-embryo transition by coordinating maternal mRNA storage, translation and degradation (PubMed:12539046, PubMed:31598710, PubMed:36264786).</text>
</comment>
<comment type="subunit">
    <text evidence="5">Interacts with YBX2.</text>
</comment>
<comment type="subcellular location">
    <subcellularLocation>
        <location evidence="5 6">Cytoplasm</location>
        <location evidence="5 6">Cytoplasmic ribonucleoprotein granule</location>
    </subcellularLocation>
    <subcellularLocation>
        <location evidence="3">Cytoplasm</location>
    </subcellularLocation>
    <text evidence="6">Specifically localizes to MARDO (mitochondria-associated ribonucleoprotein domain), a mitochondria-associated membraneless compartment that stores mRNAs in oocytes.</text>
</comment>
<comment type="tissue specificity">
    <text evidence="3 4 5">Ovary (PubMed:12539046, PubMed:12773403). Expressed in primary oocytes (from primary through antral follicle stages) and during the progression from Meiosis I to Meiosis II (PubMed:12539046, PubMed:12773403, PubMed:31598710). The mRNA is detected in growing oocytes (early primary follicle, type 3a) through fully grown oocytes (antral follicle, type 8) (PubMed:12539046, PubMed:12773403).</text>
</comment>
<comment type="developmental stage">
    <text evidence="3">Expressed in zygote at the one-cell embryo, markedly less abundant at the two-cell embryo.</text>
</comment>
<comment type="domain">
    <text evidence="6">Disordered region at the N-terminus undergoes liquid-liquid phase separation (LLPS) for the formation of MARDO (mitochondria-associated ribonucleoprotein domain), a membraneless compartment that stores maternal mRNAs in oocytes.</text>
</comment>
<comment type="domain">
    <text evidence="5">The 3CxxC-type mediates binding to the 3'-UTR of mRNAs.</text>
</comment>
<comment type="PTM">
    <text evidence="6">Phosphorylation by CDK1 does not regulate formation of MARDO (mitochondria-associated ribonucleoprotein domain) membraneless compartment.</text>
</comment>
<comment type="PTM">
    <text evidence="6">Ubiquitinated and degradaded by the proteasome during oocyte meiotic maturation, leading to MARDO (mitochondria-associated ribonucleoprotein domain) membraneless compartment dissolution.</text>
</comment>
<comment type="disruption phenotype">
    <text evidence="3 5 6">Mice are viable but females are infertile (PubMed:12539046). Ovarian development and oogenesis through the early stages of fertilization are normal, but most embryos from mutant females arrest at the one-cell stage (PubMed:12539046, PubMed:36264786). Abolished formation of MARDO phase-separated membraneless compartment and mitochondrial clustering in oocytes (PubMed:36264786). Mice lacking Zar1 and Zar1l oocytes display delayed meiotic resumption and polar body-1 emission and a higher incidence of abnormal meiotic spindle formation and chromosome aneuploidy (PubMed:31598710). The grown oocytes of Zar1 and Zar1l mutant mice contain decreased levels of many maternal mRNAs and display a reduced level of protein synthesis (PubMed:31598710).</text>
</comment>
<comment type="similarity">
    <text evidence="8">Belongs to the ZAR1 family.</text>
</comment>
<comment type="online information" name="Protein Spotlight">
    <link uri="https://www.proteinspotlight.org/back_issues/261/"/>
    <text>In good time - Issue 261 of September 2023</text>
</comment>
<proteinExistence type="evidence at protein level"/>
<gene>
    <name evidence="7 9" type="primary">Zar1</name>
</gene>
<dbReference type="EMBL" id="AY191415">
    <property type="protein sequence ID" value="AAO24706.1"/>
    <property type="molecule type" value="mRNA"/>
</dbReference>
<dbReference type="EMBL" id="AY193889">
    <property type="protein sequence ID" value="AAO24708.1"/>
    <property type="molecule type" value="Genomic_DNA"/>
</dbReference>
<dbReference type="EMBL" id="BC099399">
    <property type="protein sequence ID" value="AAH99399.1"/>
    <property type="molecule type" value="mRNA"/>
</dbReference>
<dbReference type="CCDS" id="CCDS19331.1"/>
<dbReference type="RefSeq" id="NP_777366.1">
    <property type="nucleotide sequence ID" value="NM_174877.3"/>
</dbReference>
<dbReference type="SMR" id="Q80SU3"/>
<dbReference type="FunCoup" id="Q80SU3">
    <property type="interactions" value="134"/>
</dbReference>
<dbReference type="STRING" id="10090.ENSMUSP00000073221"/>
<dbReference type="iPTMnet" id="Q80SU3"/>
<dbReference type="PhosphoSitePlus" id="Q80SU3"/>
<dbReference type="PaxDb" id="10090-ENSMUSP00000073221"/>
<dbReference type="ProteomicsDB" id="298488"/>
<dbReference type="Antibodypedia" id="67975">
    <property type="antibodies" value="120 antibodies from 18 providers"/>
</dbReference>
<dbReference type="DNASU" id="317755"/>
<dbReference type="Ensembl" id="ENSMUST00000073528.4">
    <property type="protein sequence ID" value="ENSMUSP00000073221.3"/>
    <property type="gene ID" value="ENSMUSG00000063935.4"/>
</dbReference>
<dbReference type="GeneID" id="317755"/>
<dbReference type="KEGG" id="mmu:317755"/>
<dbReference type="UCSC" id="uc008xrp.1">
    <property type="organism name" value="mouse"/>
</dbReference>
<dbReference type="AGR" id="MGI:2180337"/>
<dbReference type="CTD" id="326340"/>
<dbReference type="MGI" id="MGI:2180337">
    <property type="gene designation" value="Zar1"/>
</dbReference>
<dbReference type="VEuPathDB" id="HostDB:ENSMUSG00000063935"/>
<dbReference type="eggNOG" id="ENOG502QWC9">
    <property type="taxonomic scope" value="Eukaryota"/>
</dbReference>
<dbReference type="GeneTree" id="ENSGT00390000012305"/>
<dbReference type="HOGENOM" id="CLU_053350_0_0_1"/>
<dbReference type="InParanoid" id="Q80SU3"/>
<dbReference type="OMA" id="CSCAVTQ"/>
<dbReference type="OrthoDB" id="9885288at2759"/>
<dbReference type="PhylomeDB" id="Q80SU3"/>
<dbReference type="TreeFam" id="TF331383"/>
<dbReference type="BioGRID-ORCS" id="317755">
    <property type="hits" value="2 hits in 75 CRISPR screens"/>
</dbReference>
<dbReference type="CD-CODE" id="089DA44D">
    <property type="entry name" value="MARDO"/>
</dbReference>
<dbReference type="ChiTaRS" id="Zar1">
    <property type="organism name" value="mouse"/>
</dbReference>
<dbReference type="PRO" id="PR:Q80SU3"/>
<dbReference type="Proteomes" id="UP000000589">
    <property type="component" value="Chromosome 5"/>
</dbReference>
<dbReference type="RNAct" id="Q80SU3">
    <property type="molecule type" value="protein"/>
</dbReference>
<dbReference type="Bgee" id="ENSMUSG00000063935">
    <property type="expression patterns" value="Expressed in oocyte and 45 other cell types or tissues"/>
</dbReference>
<dbReference type="ExpressionAtlas" id="Q80SU3">
    <property type="expression patterns" value="baseline and differential"/>
</dbReference>
<dbReference type="GO" id="GO:0005737">
    <property type="term" value="C:cytoplasm"/>
    <property type="evidence" value="ECO:0000314"/>
    <property type="project" value="UniProtKB"/>
</dbReference>
<dbReference type="GO" id="GO:0036464">
    <property type="term" value="C:cytoplasmic ribonucleoprotein granule"/>
    <property type="evidence" value="ECO:0007669"/>
    <property type="project" value="UniProtKB-SubCell"/>
</dbReference>
<dbReference type="GO" id="GO:0043232">
    <property type="term" value="C:intracellular membraneless organelle"/>
    <property type="evidence" value="ECO:0000314"/>
    <property type="project" value="UniProtKB"/>
</dbReference>
<dbReference type="GO" id="GO:0140693">
    <property type="term" value="F:molecular condensate scaffold activity"/>
    <property type="evidence" value="ECO:0000314"/>
    <property type="project" value="UniProtKB"/>
</dbReference>
<dbReference type="GO" id="GO:0003730">
    <property type="term" value="F:mRNA 3'-UTR binding"/>
    <property type="evidence" value="ECO:0000314"/>
    <property type="project" value="UniProtKB"/>
</dbReference>
<dbReference type="GO" id="GO:0140610">
    <property type="term" value="F:RNA sequestering activity"/>
    <property type="evidence" value="ECO:0000314"/>
    <property type="project" value="UniProtKB"/>
</dbReference>
<dbReference type="GO" id="GO:0008270">
    <property type="term" value="F:zinc ion binding"/>
    <property type="evidence" value="ECO:0007669"/>
    <property type="project" value="UniProtKB-KW"/>
</dbReference>
<dbReference type="GO" id="GO:0140694">
    <property type="term" value="P:membraneless organelle assembly"/>
    <property type="evidence" value="ECO:0000314"/>
    <property type="project" value="UniProtKB"/>
</dbReference>
<dbReference type="GO" id="GO:0048255">
    <property type="term" value="P:mRNA stabilization"/>
    <property type="evidence" value="ECO:0000314"/>
    <property type="project" value="UniProtKB"/>
</dbReference>
<dbReference type="GO" id="GO:0017148">
    <property type="term" value="P:negative regulation of translation"/>
    <property type="evidence" value="ECO:0000314"/>
    <property type="project" value="UniProtKB"/>
</dbReference>
<dbReference type="GO" id="GO:0001556">
    <property type="term" value="P:oocyte maturation"/>
    <property type="evidence" value="ECO:0000314"/>
    <property type="project" value="UniProtKB"/>
</dbReference>
<dbReference type="InterPro" id="IPR026775">
    <property type="entry name" value="Zar1"/>
</dbReference>
<dbReference type="InterPro" id="IPR027377">
    <property type="entry name" value="ZAR1/RTP1-5-like_Znf-3CxxC"/>
</dbReference>
<dbReference type="PANTHER" id="PTHR31054:SF6">
    <property type="entry name" value="ZYGOTE ARREST PROTEIN 1"/>
    <property type="match status" value="1"/>
</dbReference>
<dbReference type="PANTHER" id="PTHR31054">
    <property type="entry name" value="ZYGOTE ARREST PROTEIN 1-LIKE ISOFORM X1"/>
    <property type="match status" value="1"/>
</dbReference>
<dbReference type="Pfam" id="PF13695">
    <property type="entry name" value="Zn_ribbon_3CxxC"/>
    <property type="match status" value="1"/>
</dbReference>
<dbReference type="SMART" id="SM01328">
    <property type="entry name" value="zf-3CxxC"/>
    <property type="match status" value="1"/>
</dbReference>
<evidence type="ECO:0000255" key="1"/>
<evidence type="ECO:0000256" key="2">
    <source>
        <dbReference type="SAM" id="MobiDB-lite"/>
    </source>
</evidence>
<evidence type="ECO:0000269" key="3">
    <source>
    </source>
</evidence>
<evidence type="ECO:0000269" key="4">
    <source>
    </source>
</evidence>
<evidence type="ECO:0000269" key="5">
    <source>
    </source>
</evidence>
<evidence type="ECO:0000269" key="6">
    <source>
    </source>
</evidence>
<evidence type="ECO:0000303" key="7">
    <source>
    </source>
</evidence>
<evidence type="ECO:0000305" key="8"/>
<evidence type="ECO:0000312" key="9">
    <source>
        <dbReference type="MGI" id="MGI:2180337"/>
    </source>
</evidence>